<feature type="chain" id="PRO_1000122037" description="Exodeoxyribonuclease 7 large subunit">
    <location>
        <begin position="1"/>
        <end position="444"/>
    </location>
</feature>
<organism>
    <name type="scientific">Aliivibrio salmonicida (strain LFI1238)</name>
    <name type="common">Vibrio salmonicida (strain LFI1238)</name>
    <dbReference type="NCBI Taxonomy" id="316275"/>
    <lineage>
        <taxon>Bacteria</taxon>
        <taxon>Pseudomonadati</taxon>
        <taxon>Pseudomonadota</taxon>
        <taxon>Gammaproteobacteria</taxon>
        <taxon>Vibrionales</taxon>
        <taxon>Vibrionaceae</taxon>
        <taxon>Aliivibrio</taxon>
    </lineage>
</organism>
<name>EX7L_ALISL</name>
<proteinExistence type="inferred from homology"/>
<evidence type="ECO:0000255" key="1">
    <source>
        <dbReference type="HAMAP-Rule" id="MF_00378"/>
    </source>
</evidence>
<protein>
    <recommendedName>
        <fullName evidence="1">Exodeoxyribonuclease 7 large subunit</fullName>
        <ecNumber evidence="1">3.1.11.6</ecNumber>
    </recommendedName>
    <alternativeName>
        <fullName evidence="1">Exodeoxyribonuclease VII large subunit</fullName>
        <shortName evidence="1">Exonuclease VII large subunit</shortName>
    </alternativeName>
</protein>
<reference key="1">
    <citation type="journal article" date="2008" name="BMC Genomics">
        <title>The genome sequence of the fish pathogen Aliivibrio salmonicida strain LFI1238 shows extensive evidence of gene decay.</title>
        <authorList>
            <person name="Hjerde E."/>
            <person name="Lorentzen M.S."/>
            <person name="Holden M.T."/>
            <person name="Seeger K."/>
            <person name="Paulsen S."/>
            <person name="Bason N."/>
            <person name="Churcher C."/>
            <person name="Harris D."/>
            <person name="Norbertczak H."/>
            <person name="Quail M.A."/>
            <person name="Sanders S."/>
            <person name="Thurston S."/>
            <person name="Parkhill J."/>
            <person name="Willassen N.P."/>
            <person name="Thomson N.R."/>
        </authorList>
    </citation>
    <scope>NUCLEOTIDE SEQUENCE [LARGE SCALE GENOMIC DNA]</scope>
    <source>
        <strain>LFI1238</strain>
    </source>
</reference>
<gene>
    <name evidence="1" type="primary">xseA</name>
    <name type="ordered locus">VSAL_I0736</name>
</gene>
<sequence>MSLDSNPRIFTVSRLNSEVRLLLENEMGIVWLVGEVSNLTMPVSGHWYLTLKDSQAQVKCAMFKGNNRRVTFKPQNGKQVLVKARLSLYEPRGDYQLIIESMQAEGDGRLQQEFDHLKMSLAAEGLFAQTAKKALPEQPKCVGIITSKTGAALFDILNVLKRRDPNLPVIIYPTLVQGTNAAIQIAQAIGRANSRNECDILIVGRGGGSLEDLWCFNEEIVARTIAASQIPIVSAVGHEIDVTIADFVADVRAPTPSAAAELVSRDLSSQLQIVSHQKRRLRSAIERYLSQQQKRLSTYQFRIEKQHPQLQLNTQSQRLDDLNQRLENHIQQRLERNQHKIENLSLRLSNLSPARKVHQDKQRIETLKRRLLDSMDRNLLMQRHQLALAAEKLDTVSPLATLKRGYSITRNASGSLITSTQQVHTGDTITTRFVDGEVQSTVDK</sequence>
<comment type="function">
    <text evidence="1">Bidirectionally degrades single-stranded DNA into large acid-insoluble oligonucleotides, which are then degraded further into small acid-soluble oligonucleotides.</text>
</comment>
<comment type="catalytic activity">
    <reaction evidence="1">
        <text>Exonucleolytic cleavage in either 5'- to 3'- or 3'- to 5'-direction to yield nucleoside 5'-phosphates.</text>
        <dbReference type="EC" id="3.1.11.6"/>
    </reaction>
</comment>
<comment type="subunit">
    <text evidence="1">Heterooligomer composed of large and small subunits.</text>
</comment>
<comment type="subcellular location">
    <subcellularLocation>
        <location evidence="1">Cytoplasm</location>
    </subcellularLocation>
</comment>
<comment type="similarity">
    <text evidence="1">Belongs to the XseA family.</text>
</comment>
<accession>B6EGZ4</accession>
<dbReference type="EC" id="3.1.11.6" evidence="1"/>
<dbReference type="EMBL" id="FM178379">
    <property type="protein sequence ID" value="CAQ78421.1"/>
    <property type="molecule type" value="Genomic_DNA"/>
</dbReference>
<dbReference type="RefSeq" id="WP_012549541.1">
    <property type="nucleotide sequence ID" value="NC_011312.1"/>
</dbReference>
<dbReference type="SMR" id="B6EGZ4"/>
<dbReference type="KEGG" id="vsa:VSAL_I0736"/>
<dbReference type="eggNOG" id="COG1570">
    <property type="taxonomic scope" value="Bacteria"/>
</dbReference>
<dbReference type="HOGENOM" id="CLU_023625_3_1_6"/>
<dbReference type="Proteomes" id="UP000001730">
    <property type="component" value="Chromosome 1"/>
</dbReference>
<dbReference type="GO" id="GO:0005737">
    <property type="term" value="C:cytoplasm"/>
    <property type="evidence" value="ECO:0007669"/>
    <property type="project" value="UniProtKB-SubCell"/>
</dbReference>
<dbReference type="GO" id="GO:0009318">
    <property type="term" value="C:exodeoxyribonuclease VII complex"/>
    <property type="evidence" value="ECO:0007669"/>
    <property type="project" value="InterPro"/>
</dbReference>
<dbReference type="GO" id="GO:0008855">
    <property type="term" value="F:exodeoxyribonuclease VII activity"/>
    <property type="evidence" value="ECO:0007669"/>
    <property type="project" value="UniProtKB-UniRule"/>
</dbReference>
<dbReference type="GO" id="GO:0003676">
    <property type="term" value="F:nucleic acid binding"/>
    <property type="evidence" value="ECO:0007669"/>
    <property type="project" value="InterPro"/>
</dbReference>
<dbReference type="GO" id="GO:0006308">
    <property type="term" value="P:DNA catabolic process"/>
    <property type="evidence" value="ECO:0007669"/>
    <property type="project" value="UniProtKB-UniRule"/>
</dbReference>
<dbReference type="CDD" id="cd04489">
    <property type="entry name" value="ExoVII_LU_OBF"/>
    <property type="match status" value="1"/>
</dbReference>
<dbReference type="HAMAP" id="MF_00378">
    <property type="entry name" value="Exonuc_7_L"/>
    <property type="match status" value="1"/>
</dbReference>
<dbReference type="InterPro" id="IPR003753">
    <property type="entry name" value="Exonuc_VII_L"/>
</dbReference>
<dbReference type="InterPro" id="IPR020579">
    <property type="entry name" value="Exonuc_VII_lsu_C"/>
</dbReference>
<dbReference type="InterPro" id="IPR025824">
    <property type="entry name" value="OB-fold_nuc-bd_dom"/>
</dbReference>
<dbReference type="NCBIfam" id="TIGR00237">
    <property type="entry name" value="xseA"/>
    <property type="match status" value="1"/>
</dbReference>
<dbReference type="PANTHER" id="PTHR30008">
    <property type="entry name" value="EXODEOXYRIBONUCLEASE 7 LARGE SUBUNIT"/>
    <property type="match status" value="1"/>
</dbReference>
<dbReference type="PANTHER" id="PTHR30008:SF0">
    <property type="entry name" value="EXODEOXYRIBONUCLEASE 7 LARGE SUBUNIT"/>
    <property type="match status" value="1"/>
</dbReference>
<dbReference type="Pfam" id="PF02601">
    <property type="entry name" value="Exonuc_VII_L"/>
    <property type="match status" value="1"/>
</dbReference>
<dbReference type="Pfam" id="PF13742">
    <property type="entry name" value="tRNA_anti_2"/>
    <property type="match status" value="1"/>
</dbReference>
<keyword id="KW-0963">Cytoplasm</keyword>
<keyword id="KW-0269">Exonuclease</keyword>
<keyword id="KW-0378">Hydrolase</keyword>
<keyword id="KW-0540">Nuclease</keyword>